<dbReference type="PIR" id="A56585">
    <property type="entry name" value="A56585"/>
</dbReference>
<dbReference type="GO" id="GO:0042302">
    <property type="term" value="F:structural constituent of cuticle"/>
    <property type="evidence" value="ECO:0007669"/>
    <property type="project" value="UniProtKB-KW"/>
</dbReference>
<dbReference type="InterPro" id="IPR022727">
    <property type="entry name" value="Cuticle_C1"/>
</dbReference>
<dbReference type="PANTHER" id="PTHR39068">
    <property type="entry name" value="LARVAL/PUPAL CUTICLE PROTEIN H1C-LIKE PROTEIN-RELATED"/>
    <property type="match status" value="1"/>
</dbReference>
<dbReference type="PANTHER" id="PTHR39068:SF5">
    <property type="entry name" value="PUPAL CUTICLE PROTEIN C1B-LIKE PROTEIN"/>
    <property type="match status" value="1"/>
</dbReference>
<dbReference type="Pfam" id="PF11018">
    <property type="entry name" value="Cuticle_3"/>
    <property type="match status" value="1"/>
</dbReference>
<sequence>GYLGGYAAPALAYGAAAVAPAAITSQQSNILRSYGNLGQVSTYSKTVDTPYSSVSKADIRVTNNAVYAAPAAYAAAPVAYAAPALGYARTALAAPALGYARAAYAAPAVAAGGLLGVAYSAAPAVAHLTYSGLHAAYAY</sequence>
<accession>P45588</accession>
<feature type="chain" id="PRO_0000196113" description="Cuticle protein 76">
    <location>
        <begin position="1"/>
        <end position="139"/>
    </location>
</feature>
<feature type="repeat" description="1">
    <location>
        <begin position="7"/>
        <end position="10"/>
    </location>
</feature>
<feature type="repeat" description="2">
    <location>
        <begin position="68"/>
        <end position="71"/>
    </location>
</feature>
<feature type="repeat" description="3">
    <location>
        <begin position="75"/>
        <end position="78"/>
    </location>
</feature>
<feature type="repeat" description="4">
    <location>
        <begin position="93"/>
        <end position="95"/>
    </location>
</feature>
<feature type="repeat" description="5">
    <location>
        <begin position="105"/>
        <end position="108"/>
    </location>
</feature>
<feature type="repeat" description="6">
    <location>
        <begin position="121"/>
        <end position="124"/>
    </location>
</feature>
<organism>
    <name type="scientific">Locusta migratoria</name>
    <name type="common">Migratory locust</name>
    <dbReference type="NCBI Taxonomy" id="7004"/>
    <lineage>
        <taxon>Eukaryota</taxon>
        <taxon>Metazoa</taxon>
        <taxon>Ecdysozoa</taxon>
        <taxon>Arthropoda</taxon>
        <taxon>Hexapoda</taxon>
        <taxon>Insecta</taxon>
        <taxon>Pterygota</taxon>
        <taxon>Neoptera</taxon>
        <taxon>Polyneoptera</taxon>
        <taxon>Orthoptera</taxon>
        <taxon>Caelifera</taxon>
        <taxon>Acrididea</taxon>
        <taxon>Acridomorpha</taxon>
        <taxon>Acridoidea</taxon>
        <taxon>Acrididae</taxon>
        <taxon>Oedipodinae</taxon>
        <taxon>Locusta</taxon>
    </lineage>
</organism>
<comment type="function">
    <text>Component of the cuticle of migratory locust which contains more than 100 different structural proteins.</text>
</comment>
<comment type="domain">
    <text>The tetrapeptide (A-A-P-[AV]) repeats found throughout the protein are also present in many proteins constituting the protective envelope of other species.</text>
</comment>
<keyword id="KW-0193">Cuticle</keyword>
<keyword id="KW-0903">Direct protein sequencing</keyword>
<keyword id="KW-0677">Repeat</keyword>
<protein>
    <recommendedName>
        <fullName>Cuticle protein 76</fullName>
    </recommendedName>
    <alternativeName>
        <fullName>LM-ACP 76</fullName>
        <shortName>LM-76</shortName>
    </alternativeName>
</protein>
<reference key="1">
    <citation type="journal article" date="1993" name="Insect Biochem. Mol. Biol.">
        <title>Primary structure of a 14 kDa basic structural protein (Lm-76) from the cuticle of the migratory locust, Locusta migratoria.</title>
        <authorList>
            <person name="Andersen J.S."/>
            <person name="Andersen S.O."/>
            <person name="Hoejrup P."/>
            <person name="Roepstorff P."/>
        </authorList>
    </citation>
    <scope>PROTEIN SEQUENCE</scope>
</reference>
<proteinExistence type="evidence at protein level"/>
<name>CU76_LOCMI</name>